<keyword id="KW-1003">Cell membrane</keyword>
<keyword id="KW-0963">Cytoplasm</keyword>
<keyword id="KW-0472">Membrane</keyword>
<keyword id="KW-0539">Nucleus</keyword>
<keyword id="KW-1185">Reference proteome</keyword>
<gene>
    <name type="primary">ranbp9</name>
    <name type="ORF">zgc:158650</name>
</gene>
<accession>A1L252</accession>
<sequence>MSGPSSGCGFLMSVVVHGDLALNEQEKELNQRLRRLYPAVNEQETPLPRSWSPKDKFSYIGLSQNNLRVHYKGHGKTPKDAASVRATHPIPAACGVYYFEVKIISKGRDGYMGIGLSAQGVNMNRLPGWDKHSYGYHGDDGHSFCSSGTGQPYGPTFTTGDVIGCCVNLINNTCFYTKNGHSLGIAFTDLPPNLYPTVGLQTPGEVVDANFGQHPFVFDIEDYMREWRTKIQSQIDRFPIGEREGEWQAMIQKMVASYLVHHSYCATAEAFAKSTDQAVHEELASIKNRQKIQKLVLSGRMGEAIETTQQLYPSLLERNPDLLFMLKVRQFIEMVNGTDSEVRCLGGRSPKSQDSYPGSPRLFNSPVHKPSSSQAYQTGFDSNYCNGVSSSKGHTSAHSHKSCPPTLSSPELGVLNGSRGQQTIVSSEVEMEVDHFSNGVSESSSNGFLNGSSTHGTEQEDCDADMEVDSTQSKRQLCGGSQAAIERMIQFGRELQSMSEHLRRERGKNSANKKMLKDAFSLLAYSDPWNSPVGYQLDSIQREPVCSTLNSAILETHNLPKQPPLALAMGQAAQCLSLMARTGSGSCAFASVDDYLH</sequence>
<feature type="chain" id="PRO_0000305233" description="Ran-binding protein 9">
    <location>
        <begin position="1"/>
        <end position="597"/>
    </location>
</feature>
<feature type="domain" description="B30.2/SPRY" evidence="5">
    <location>
        <begin position="29"/>
        <end position="216"/>
    </location>
</feature>
<feature type="domain" description="LisH" evidence="4">
    <location>
        <begin position="247"/>
        <end position="279"/>
    </location>
</feature>
<feature type="domain" description="CTLH" evidence="3">
    <location>
        <begin position="285"/>
        <end position="342"/>
    </location>
</feature>
<feature type="region of interest" description="Disordered" evidence="6">
    <location>
        <begin position="343"/>
        <end position="375"/>
    </location>
</feature>
<feature type="region of interest" description="Disordered" evidence="6">
    <location>
        <begin position="389"/>
        <end position="417"/>
    </location>
</feature>
<feature type="region of interest" description="Disordered" evidence="6">
    <location>
        <begin position="437"/>
        <end position="475"/>
    </location>
</feature>
<feature type="compositionally biased region" description="Polar residues" evidence="6">
    <location>
        <begin position="438"/>
        <end position="456"/>
    </location>
</feature>
<feature type="compositionally biased region" description="Acidic residues" evidence="6">
    <location>
        <begin position="459"/>
        <end position="468"/>
    </location>
</feature>
<comment type="function">
    <text evidence="2">May act as scaffolding protein, and as adapter protein to couple membrane receptors to intracellular signaling pathways. Acts as a mediator of cell spreading and actin cytoskeleton rearrangement. Core component of the CTLH E3 ubiquitin-protein ligase complex that mediates ubiquitination and subsequent proteasomal degradation of target proteins.</text>
</comment>
<comment type="subunit">
    <text evidence="2">Identified in the CTLH complex that contains at least MAEA, RMND5A (or alternatively its paralog RMND5B), GID8, WDR26, and RANBP9 and/or RANBP10.</text>
</comment>
<comment type="subcellular location">
    <subcellularLocation>
        <location evidence="1">Cytoplasm</location>
    </subcellularLocation>
    <subcellularLocation>
        <location evidence="1">Cell membrane</location>
        <topology evidence="1">Peripheral membrane protein</topology>
        <orientation evidence="1">Cytoplasmic side</orientation>
    </subcellularLocation>
    <subcellularLocation>
        <location evidence="1">Nucleus</location>
    </subcellularLocation>
    <text evidence="1">Predominantly cytoplasmic.</text>
</comment>
<comment type="similarity">
    <text evidence="7">Belongs to the RANBP9/10 family.</text>
</comment>
<proteinExistence type="evidence at transcript level"/>
<organism>
    <name type="scientific">Danio rerio</name>
    <name type="common">Zebrafish</name>
    <name type="synonym">Brachydanio rerio</name>
    <dbReference type="NCBI Taxonomy" id="7955"/>
    <lineage>
        <taxon>Eukaryota</taxon>
        <taxon>Metazoa</taxon>
        <taxon>Chordata</taxon>
        <taxon>Craniata</taxon>
        <taxon>Vertebrata</taxon>
        <taxon>Euteleostomi</taxon>
        <taxon>Actinopterygii</taxon>
        <taxon>Neopterygii</taxon>
        <taxon>Teleostei</taxon>
        <taxon>Ostariophysi</taxon>
        <taxon>Cypriniformes</taxon>
        <taxon>Danionidae</taxon>
        <taxon>Danioninae</taxon>
        <taxon>Danio</taxon>
    </lineage>
</organism>
<evidence type="ECO:0000250" key="1">
    <source>
        <dbReference type="UniProtKB" id="P69566"/>
    </source>
</evidence>
<evidence type="ECO:0000250" key="2">
    <source>
        <dbReference type="UniProtKB" id="Q96S59"/>
    </source>
</evidence>
<evidence type="ECO:0000255" key="3">
    <source>
        <dbReference type="PROSITE-ProRule" id="PRU00058"/>
    </source>
</evidence>
<evidence type="ECO:0000255" key="4">
    <source>
        <dbReference type="PROSITE-ProRule" id="PRU00126"/>
    </source>
</evidence>
<evidence type="ECO:0000255" key="5">
    <source>
        <dbReference type="PROSITE-ProRule" id="PRU00548"/>
    </source>
</evidence>
<evidence type="ECO:0000256" key="6">
    <source>
        <dbReference type="SAM" id="MobiDB-lite"/>
    </source>
</evidence>
<evidence type="ECO:0000305" key="7"/>
<dbReference type="EMBL" id="BC129352">
    <property type="protein sequence ID" value="AAI29353.1"/>
    <property type="molecule type" value="mRNA"/>
</dbReference>
<dbReference type="RefSeq" id="NP_001074040.1">
    <property type="nucleotide sequence ID" value="NM_001080571.2"/>
</dbReference>
<dbReference type="SMR" id="A1L252"/>
<dbReference type="FunCoup" id="A1L252">
    <property type="interactions" value="2646"/>
</dbReference>
<dbReference type="STRING" id="7955.ENSDARP00000081043"/>
<dbReference type="PaxDb" id="7955-ENSDARP00000081043"/>
<dbReference type="PeptideAtlas" id="A1L252"/>
<dbReference type="GeneID" id="558976"/>
<dbReference type="KEGG" id="dre:558976"/>
<dbReference type="AGR" id="ZFIN:ZDB-GENE-021030-5"/>
<dbReference type="CTD" id="10048"/>
<dbReference type="ZFIN" id="ZDB-GENE-021030-5">
    <property type="gene designation" value="ranbp9"/>
</dbReference>
<dbReference type="eggNOG" id="KOG1477">
    <property type="taxonomic scope" value="Eukaryota"/>
</dbReference>
<dbReference type="InParanoid" id="A1L252"/>
<dbReference type="OrthoDB" id="25503at2759"/>
<dbReference type="PhylomeDB" id="A1L252"/>
<dbReference type="Reactome" id="R-DRE-5673001">
    <property type="pathway name" value="RAF/MAP kinase cascade"/>
</dbReference>
<dbReference type="Reactome" id="R-DRE-8851805">
    <property type="pathway name" value="MET activates RAS signaling"/>
</dbReference>
<dbReference type="Reactome" id="R-DRE-9861718">
    <property type="pathway name" value="Regulation of pyruvate metabolism"/>
</dbReference>
<dbReference type="PRO" id="PR:A1L252"/>
<dbReference type="Proteomes" id="UP000000437">
    <property type="component" value="Chromosome 2"/>
</dbReference>
<dbReference type="GO" id="GO:0005737">
    <property type="term" value="C:cytoplasm"/>
    <property type="evidence" value="ECO:0000250"/>
    <property type="project" value="UniProtKB"/>
</dbReference>
<dbReference type="GO" id="GO:0005634">
    <property type="term" value="C:nucleus"/>
    <property type="evidence" value="ECO:0000250"/>
    <property type="project" value="UniProtKB"/>
</dbReference>
<dbReference type="GO" id="GO:0005886">
    <property type="term" value="C:plasma membrane"/>
    <property type="evidence" value="ECO:0007669"/>
    <property type="project" value="UniProtKB-SubCell"/>
</dbReference>
<dbReference type="GO" id="GO:0007010">
    <property type="term" value="P:cytoskeleton organization"/>
    <property type="evidence" value="ECO:0000318"/>
    <property type="project" value="GO_Central"/>
</dbReference>
<dbReference type="GO" id="GO:0060041">
    <property type="term" value="P:retina development in camera-type eye"/>
    <property type="evidence" value="ECO:0000315"/>
    <property type="project" value="ZFIN"/>
</dbReference>
<dbReference type="CDD" id="cd12909">
    <property type="entry name" value="SPRY_RanBP9_10"/>
    <property type="match status" value="1"/>
</dbReference>
<dbReference type="FunFam" id="2.60.120.920:FF:000011">
    <property type="entry name" value="RAN binding protein 10"/>
    <property type="match status" value="1"/>
</dbReference>
<dbReference type="Gene3D" id="2.60.120.920">
    <property type="match status" value="1"/>
</dbReference>
<dbReference type="InterPro" id="IPR001870">
    <property type="entry name" value="B30.2/SPRY"/>
</dbReference>
<dbReference type="InterPro" id="IPR043136">
    <property type="entry name" value="B30.2/SPRY_sf"/>
</dbReference>
<dbReference type="InterPro" id="IPR013320">
    <property type="entry name" value="ConA-like_dom_sf"/>
</dbReference>
<dbReference type="InterPro" id="IPR013144">
    <property type="entry name" value="CRA_dom"/>
</dbReference>
<dbReference type="InterPro" id="IPR024964">
    <property type="entry name" value="CTLH/CRA"/>
</dbReference>
<dbReference type="InterPro" id="IPR006595">
    <property type="entry name" value="CTLH_C"/>
</dbReference>
<dbReference type="InterPro" id="IPR006594">
    <property type="entry name" value="LisH"/>
</dbReference>
<dbReference type="InterPro" id="IPR003877">
    <property type="entry name" value="SPRY_dom"/>
</dbReference>
<dbReference type="InterPro" id="IPR035782">
    <property type="entry name" value="SPRY_RanBP9/10"/>
</dbReference>
<dbReference type="InterPro" id="IPR050618">
    <property type="entry name" value="Ubq-SigPath_Reg"/>
</dbReference>
<dbReference type="PANTHER" id="PTHR12864">
    <property type="entry name" value="RAN BINDING PROTEIN 9-RELATED"/>
    <property type="match status" value="1"/>
</dbReference>
<dbReference type="Pfam" id="PF10607">
    <property type="entry name" value="CTLH"/>
    <property type="match status" value="2"/>
</dbReference>
<dbReference type="Pfam" id="PF08513">
    <property type="entry name" value="LisH"/>
    <property type="match status" value="1"/>
</dbReference>
<dbReference type="Pfam" id="PF00622">
    <property type="entry name" value="SPRY"/>
    <property type="match status" value="1"/>
</dbReference>
<dbReference type="SMART" id="SM00757">
    <property type="entry name" value="CRA"/>
    <property type="match status" value="1"/>
</dbReference>
<dbReference type="SMART" id="SM00668">
    <property type="entry name" value="CTLH"/>
    <property type="match status" value="1"/>
</dbReference>
<dbReference type="SMART" id="SM00667">
    <property type="entry name" value="LisH"/>
    <property type="match status" value="1"/>
</dbReference>
<dbReference type="SMART" id="SM00449">
    <property type="entry name" value="SPRY"/>
    <property type="match status" value="1"/>
</dbReference>
<dbReference type="SUPFAM" id="SSF49899">
    <property type="entry name" value="Concanavalin A-like lectins/glucanases"/>
    <property type="match status" value="1"/>
</dbReference>
<dbReference type="PROSITE" id="PS50188">
    <property type="entry name" value="B302_SPRY"/>
    <property type="match status" value="1"/>
</dbReference>
<dbReference type="PROSITE" id="PS50897">
    <property type="entry name" value="CTLH"/>
    <property type="match status" value="1"/>
</dbReference>
<dbReference type="PROSITE" id="PS50896">
    <property type="entry name" value="LISH"/>
    <property type="match status" value="1"/>
</dbReference>
<protein>
    <recommendedName>
        <fullName>Ran-binding protein 9</fullName>
        <shortName>RanBP9</shortName>
    </recommendedName>
</protein>
<name>RANB9_DANRE</name>
<reference key="1">
    <citation type="submission" date="2006-12" db="EMBL/GenBank/DDBJ databases">
        <authorList>
            <consortium name="NIH - Zebrafish Gene Collection (ZGC) project"/>
        </authorList>
    </citation>
    <scope>NUCLEOTIDE SEQUENCE [LARGE SCALE MRNA]</scope>
    <source>
        <tissue>Olfactory epithelium</tissue>
    </source>
</reference>